<dbReference type="EC" id="3.1.4.11" evidence="9"/>
<dbReference type="EMBL" id="DQ176851">
    <property type="protein sequence ID" value="ABA12210.1"/>
    <property type="molecule type" value="mRNA"/>
</dbReference>
<dbReference type="EMBL" id="AL831788">
    <property type="protein sequence ID" value="CAM16344.2"/>
    <property type="molecule type" value="Genomic_DNA"/>
</dbReference>
<dbReference type="EMBL" id="BX004788">
    <property type="protein sequence ID" value="CAM16344.2"/>
    <property type="status" value="JOINED"/>
    <property type="molecule type" value="Genomic_DNA"/>
</dbReference>
<dbReference type="EMBL" id="BX004788">
    <property type="protein sequence ID" value="CAM28037.2"/>
    <property type="molecule type" value="Genomic_DNA"/>
</dbReference>
<dbReference type="EMBL" id="AL831788">
    <property type="protein sequence ID" value="CAM28037.2"/>
    <property type="status" value="JOINED"/>
    <property type="molecule type" value="Genomic_DNA"/>
</dbReference>
<dbReference type="EMBL" id="AL831788">
    <property type="protein sequence ID" value="CAO78007.1"/>
    <property type="status" value="ALT_SEQ"/>
    <property type="molecule type" value="Genomic_DNA"/>
</dbReference>
<dbReference type="EMBL" id="BX004788">
    <property type="protein sequence ID" value="CAO78007.1"/>
    <property type="status" value="JOINED"/>
    <property type="molecule type" value="Genomic_DNA"/>
</dbReference>
<dbReference type="EMBL" id="BX004788">
    <property type="protein sequence ID" value="CAO78129.1"/>
    <property type="status" value="ALT_SEQ"/>
    <property type="molecule type" value="Genomic_DNA"/>
</dbReference>
<dbReference type="EMBL" id="AL831788">
    <property type="protein sequence ID" value="CAO78129.1"/>
    <property type="status" value="JOINED"/>
    <property type="molecule type" value="Genomic_DNA"/>
</dbReference>
<dbReference type="EMBL" id="AK044619">
    <property type="protein sequence ID" value="BAC32005.1"/>
    <property type="status" value="ALT_SEQ"/>
    <property type="molecule type" value="mRNA"/>
</dbReference>
<dbReference type="EMBL" id="AK049970">
    <property type="protein sequence ID" value="BAC34011.1"/>
    <property type="molecule type" value="mRNA"/>
</dbReference>
<dbReference type="EMBL" id="AK078731">
    <property type="protein sequence ID" value="BAC37371.1"/>
    <property type="status" value="ALT_SEQ"/>
    <property type="molecule type" value="mRNA"/>
</dbReference>
<dbReference type="EMBL" id="AY966876">
    <property type="protein sequence ID" value="AAY33831.1"/>
    <property type="molecule type" value="mRNA"/>
</dbReference>
<dbReference type="EMBL" id="BC040465">
    <property type="protein sequence ID" value="AAH40465.1"/>
    <property type="molecule type" value="mRNA"/>
</dbReference>
<dbReference type="EMBL" id="BC052329">
    <property type="protein sequence ID" value="AAH52329.1"/>
    <property type="molecule type" value="mRNA"/>
</dbReference>
<dbReference type="CCDS" id="CCDS38990.2">
    <molecule id="A2AP18-2"/>
</dbReference>
<dbReference type="CCDS" id="CCDS71533.1">
    <molecule id="A2AP18-1"/>
</dbReference>
<dbReference type="RefSeq" id="NP_001106831.1">
    <molecule id="A2AP18-1"/>
    <property type="nucleotide sequence ID" value="NM_001113360.3"/>
</dbReference>
<dbReference type="RefSeq" id="NP_780765.2">
    <property type="nucleotide sequence ID" value="NM_175556.4"/>
</dbReference>
<dbReference type="SMR" id="A2AP18"/>
<dbReference type="BioGRID" id="234680">
    <property type="interactions" value="1"/>
</dbReference>
<dbReference type="FunCoup" id="A2AP18">
    <property type="interactions" value="227"/>
</dbReference>
<dbReference type="STRING" id="10090.ENSMUSP00000101256"/>
<dbReference type="SwissLipids" id="SLP:000000943"/>
<dbReference type="GlyGen" id="A2AP18">
    <property type="glycosylation" value="3 sites, 1 N-linked glycan (1 site)"/>
</dbReference>
<dbReference type="iPTMnet" id="A2AP18"/>
<dbReference type="PhosphoSitePlus" id="A2AP18"/>
<dbReference type="SwissPalm" id="A2AP18"/>
<dbReference type="PaxDb" id="10090-ENSMUSP00000101256"/>
<dbReference type="ProteomicsDB" id="289536">
    <molecule id="A2AP18-1"/>
</dbReference>
<dbReference type="ProteomicsDB" id="289537">
    <molecule id="A2AP18-2"/>
</dbReference>
<dbReference type="ProteomicsDB" id="289538">
    <molecule id="A2AP18-3"/>
</dbReference>
<dbReference type="ProteomicsDB" id="289539">
    <molecule id="A2AP18-4"/>
</dbReference>
<dbReference type="ProteomicsDB" id="289540">
    <molecule id="A2AP18-5"/>
</dbReference>
<dbReference type="Antibodypedia" id="1163">
    <property type="antibodies" value="25 antibodies from 13 providers"/>
</dbReference>
<dbReference type="DNASU" id="269615"/>
<dbReference type="Ensembl" id="ENSMUST00000105631.9">
    <molecule id="A2AP18-1"/>
    <property type="protein sequence ID" value="ENSMUSP00000101256.3"/>
    <property type="gene ID" value="ENSMUSG00000029055.18"/>
</dbReference>
<dbReference type="Ensembl" id="ENSMUST00000135665.9">
    <molecule id="A2AP18-4"/>
    <property type="protein sequence ID" value="ENSMUSP00000118292.3"/>
    <property type="gene ID" value="ENSMUSG00000029055.18"/>
</dbReference>
<dbReference type="Ensembl" id="ENSMUST00000145662.9">
    <molecule id="A2AP18-5"/>
    <property type="protein sequence ID" value="ENSMUSP00000119864.3"/>
    <property type="gene ID" value="ENSMUSG00000029055.18"/>
</dbReference>
<dbReference type="GeneID" id="269615"/>
<dbReference type="KEGG" id="mmu:269615"/>
<dbReference type="UCSC" id="uc008wcq.2">
    <molecule id="A2AP18-5"/>
    <property type="organism name" value="mouse"/>
</dbReference>
<dbReference type="UCSC" id="uc056zyr.1">
    <molecule id="A2AP18-1"/>
    <property type="organism name" value="mouse"/>
</dbReference>
<dbReference type="AGR" id="MGI:2443078"/>
<dbReference type="CTD" id="9651"/>
<dbReference type="MGI" id="MGI:2443078">
    <property type="gene designation" value="Plch2"/>
</dbReference>
<dbReference type="VEuPathDB" id="HostDB:ENSMUSG00000029055"/>
<dbReference type="eggNOG" id="KOG0169">
    <property type="taxonomic scope" value="Eukaryota"/>
</dbReference>
<dbReference type="GeneTree" id="ENSGT00940000158374"/>
<dbReference type="HOGENOM" id="CLU_030679_1_0_1"/>
<dbReference type="InParanoid" id="A2AP18"/>
<dbReference type="OrthoDB" id="269822at2759"/>
<dbReference type="PhylomeDB" id="A2AP18"/>
<dbReference type="TreeFam" id="TF313216"/>
<dbReference type="BRENDA" id="3.1.4.11">
    <property type="organism ID" value="3474"/>
</dbReference>
<dbReference type="Reactome" id="R-MMU-1855204">
    <property type="pathway name" value="Synthesis of IP3 and IP4 in the cytosol"/>
</dbReference>
<dbReference type="BioGRID-ORCS" id="269615">
    <property type="hits" value="6 hits in 73 CRISPR screens"/>
</dbReference>
<dbReference type="ChiTaRS" id="Plch2">
    <property type="organism name" value="mouse"/>
</dbReference>
<dbReference type="PRO" id="PR:A2AP18"/>
<dbReference type="Proteomes" id="UP000000589">
    <property type="component" value="Chromosome 4"/>
</dbReference>
<dbReference type="RNAct" id="A2AP18">
    <property type="molecule type" value="protein"/>
</dbReference>
<dbReference type="Bgee" id="ENSMUSG00000029055">
    <property type="expression patterns" value="Expressed in habenula and 141 other cell types or tissues"/>
</dbReference>
<dbReference type="ExpressionAtlas" id="A2AP18">
    <property type="expression patterns" value="baseline and differential"/>
</dbReference>
<dbReference type="GO" id="GO:0005737">
    <property type="term" value="C:cytoplasm"/>
    <property type="evidence" value="ECO:0007669"/>
    <property type="project" value="UniProtKB-SubCell"/>
</dbReference>
<dbReference type="GO" id="GO:0005886">
    <property type="term" value="C:plasma membrane"/>
    <property type="evidence" value="ECO:0000314"/>
    <property type="project" value="MGI"/>
</dbReference>
<dbReference type="GO" id="GO:0005509">
    <property type="term" value="F:calcium ion binding"/>
    <property type="evidence" value="ECO:0007669"/>
    <property type="project" value="InterPro"/>
</dbReference>
<dbReference type="GO" id="GO:0004435">
    <property type="term" value="F:phosphatidylinositol-4,5-bisphosphate phospholipase C activity"/>
    <property type="evidence" value="ECO:0000250"/>
    <property type="project" value="UniProtKB"/>
</dbReference>
<dbReference type="GO" id="GO:0004629">
    <property type="term" value="F:phospholipase C activity"/>
    <property type="evidence" value="ECO:0000314"/>
    <property type="project" value="MGI"/>
</dbReference>
<dbReference type="GO" id="GO:0035556">
    <property type="term" value="P:intracellular signal transduction"/>
    <property type="evidence" value="ECO:0007669"/>
    <property type="project" value="InterPro"/>
</dbReference>
<dbReference type="GO" id="GO:0016042">
    <property type="term" value="P:lipid catabolic process"/>
    <property type="evidence" value="ECO:0007669"/>
    <property type="project" value="UniProtKB-KW"/>
</dbReference>
<dbReference type="GO" id="GO:0046488">
    <property type="term" value="P:phosphatidylinositol metabolic process"/>
    <property type="evidence" value="ECO:0000314"/>
    <property type="project" value="MGI"/>
</dbReference>
<dbReference type="GO" id="GO:0007200">
    <property type="term" value="P:phospholipase C-activating G protein-coupled receptor signaling pathway"/>
    <property type="evidence" value="ECO:0000250"/>
    <property type="project" value="UniProtKB"/>
</dbReference>
<dbReference type="CDD" id="cd00275">
    <property type="entry name" value="C2_PLC_like"/>
    <property type="match status" value="1"/>
</dbReference>
<dbReference type="CDD" id="cd16221">
    <property type="entry name" value="EFh_PI-PLCeta2"/>
    <property type="match status" value="1"/>
</dbReference>
<dbReference type="CDD" id="cd13364">
    <property type="entry name" value="PH_PLC_eta"/>
    <property type="match status" value="1"/>
</dbReference>
<dbReference type="CDD" id="cd08633">
    <property type="entry name" value="PI-PLCc_eta2"/>
    <property type="match status" value="1"/>
</dbReference>
<dbReference type="FunFam" id="1.10.238.10:FF:000005">
    <property type="entry name" value="Phosphoinositide phospholipase C"/>
    <property type="match status" value="1"/>
</dbReference>
<dbReference type="FunFam" id="1.10.238.10:FF:000036">
    <property type="entry name" value="Phosphoinositide phospholipase C"/>
    <property type="match status" value="1"/>
</dbReference>
<dbReference type="FunFam" id="2.30.29.30:FF:000063">
    <property type="entry name" value="Phosphoinositide phospholipase C"/>
    <property type="match status" value="1"/>
</dbReference>
<dbReference type="FunFam" id="2.60.40.150:FF:000018">
    <property type="entry name" value="Phosphoinositide phospholipase C"/>
    <property type="match status" value="1"/>
</dbReference>
<dbReference type="FunFam" id="3.20.20.190:FF:000002">
    <property type="entry name" value="Phosphoinositide phospholipase C"/>
    <property type="match status" value="1"/>
</dbReference>
<dbReference type="FunFam" id="3.20.20.190:FF:000006">
    <property type="entry name" value="Phosphoinositide phospholipase C"/>
    <property type="match status" value="1"/>
</dbReference>
<dbReference type="Gene3D" id="2.60.40.150">
    <property type="entry name" value="C2 domain"/>
    <property type="match status" value="1"/>
</dbReference>
<dbReference type="Gene3D" id="1.10.238.10">
    <property type="entry name" value="EF-hand"/>
    <property type="match status" value="2"/>
</dbReference>
<dbReference type="Gene3D" id="3.20.20.190">
    <property type="entry name" value="Phosphatidylinositol (PI) phosphodiesterase"/>
    <property type="match status" value="2"/>
</dbReference>
<dbReference type="Gene3D" id="2.30.29.30">
    <property type="entry name" value="Pleckstrin-homology domain (PH domain)/Phosphotyrosine-binding domain (PTB)"/>
    <property type="match status" value="1"/>
</dbReference>
<dbReference type="InterPro" id="IPR000008">
    <property type="entry name" value="C2_dom"/>
</dbReference>
<dbReference type="InterPro" id="IPR035892">
    <property type="entry name" value="C2_domain_sf"/>
</dbReference>
<dbReference type="InterPro" id="IPR011992">
    <property type="entry name" value="EF-hand-dom_pair"/>
</dbReference>
<dbReference type="InterPro" id="IPR018247">
    <property type="entry name" value="EF_Hand_1_Ca_BS"/>
</dbReference>
<dbReference type="InterPro" id="IPR002048">
    <property type="entry name" value="EF_hand_dom"/>
</dbReference>
<dbReference type="InterPro" id="IPR011993">
    <property type="entry name" value="PH-like_dom_sf"/>
</dbReference>
<dbReference type="InterPro" id="IPR001849">
    <property type="entry name" value="PH_domain"/>
</dbReference>
<dbReference type="InterPro" id="IPR001192">
    <property type="entry name" value="PI-PLC_fam"/>
</dbReference>
<dbReference type="InterPro" id="IPR028393">
    <property type="entry name" value="PLC-eta2_cat"/>
</dbReference>
<dbReference type="InterPro" id="IPR046971">
    <property type="entry name" value="PLC-eta2_EFh"/>
</dbReference>
<dbReference type="InterPro" id="IPR017946">
    <property type="entry name" value="PLC-like_Pdiesterase_TIM-brl"/>
</dbReference>
<dbReference type="InterPro" id="IPR015359">
    <property type="entry name" value="PLC_EF-hand-like"/>
</dbReference>
<dbReference type="InterPro" id="IPR000909">
    <property type="entry name" value="PLipase_C_PInositol-sp_X_dom"/>
</dbReference>
<dbReference type="InterPro" id="IPR001711">
    <property type="entry name" value="PLipase_C_Pinositol-sp_Y"/>
</dbReference>
<dbReference type="PANTHER" id="PTHR10336:SF166">
    <property type="entry name" value="1-PHOSPHATIDYLINOSITOL 4,5-BISPHOSPHATE PHOSPHODIESTERASE ETA-2"/>
    <property type="match status" value="1"/>
</dbReference>
<dbReference type="PANTHER" id="PTHR10336">
    <property type="entry name" value="PHOSPHOINOSITIDE-SPECIFIC PHOSPHOLIPASE C FAMILY PROTEIN"/>
    <property type="match status" value="1"/>
</dbReference>
<dbReference type="Pfam" id="PF00168">
    <property type="entry name" value="C2"/>
    <property type="match status" value="1"/>
</dbReference>
<dbReference type="Pfam" id="PF09279">
    <property type="entry name" value="EF-hand_like"/>
    <property type="match status" value="1"/>
</dbReference>
<dbReference type="Pfam" id="PF16457">
    <property type="entry name" value="PH_12"/>
    <property type="match status" value="1"/>
</dbReference>
<dbReference type="Pfam" id="PF00388">
    <property type="entry name" value="PI-PLC-X"/>
    <property type="match status" value="1"/>
</dbReference>
<dbReference type="Pfam" id="PF00387">
    <property type="entry name" value="PI-PLC-Y"/>
    <property type="match status" value="1"/>
</dbReference>
<dbReference type="PRINTS" id="PR00390">
    <property type="entry name" value="PHPHLIPASEC"/>
</dbReference>
<dbReference type="SMART" id="SM00239">
    <property type="entry name" value="C2"/>
    <property type="match status" value="1"/>
</dbReference>
<dbReference type="SMART" id="SM00054">
    <property type="entry name" value="EFh"/>
    <property type="match status" value="2"/>
</dbReference>
<dbReference type="SMART" id="SM00233">
    <property type="entry name" value="PH"/>
    <property type="match status" value="1"/>
</dbReference>
<dbReference type="SMART" id="SM00148">
    <property type="entry name" value="PLCXc"/>
    <property type="match status" value="1"/>
</dbReference>
<dbReference type="SMART" id="SM00149">
    <property type="entry name" value="PLCYc"/>
    <property type="match status" value="1"/>
</dbReference>
<dbReference type="SUPFAM" id="SSF49562">
    <property type="entry name" value="C2 domain (Calcium/lipid-binding domain, CaLB)"/>
    <property type="match status" value="1"/>
</dbReference>
<dbReference type="SUPFAM" id="SSF47473">
    <property type="entry name" value="EF-hand"/>
    <property type="match status" value="1"/>
</dbReference>
<dbReference type="SUPFAM" id="SSF50729">
    <property type="entry name" value="PH domain-like"/>
    <property type="match status" value="1"/>
</dbReference>
<dbReference type="SUPFAM" id="SSF51695">
    <property type="entry name" value="PLC-like phosphodiesterases"/>
    <property type="match status" value="1"/>
</dbReference>
<dbReference type="PROSITE" id="PS50004">
    <property type="entry name" value="C2"/>
    <property type="match status" value="1"/>
</dbReference>
<dbReference type="PROSITE" id="PS00018">
    <property type="entry name" value="EF_HAND_1"/>
    <property type="match status" value="1"/>
</dbReference>
<dbReference type="PROSITE" id="PS50222">
    <property type="entry name" value="EF_HAND_2"/>
    <property type="match status" value="2"/>
</dbReference>
<dbReference type="PROSITE" id="PS50003">
    <property type="entry name" value="PH_DOMAIN"/>
    <property type="match status" value="1"/>
</dbReference>
<dbReference type="PROSITE" id="PS50007">
    <property type="entry name" value="PIPLC_X_DOMAIN"/>
    <property type="match status" value="1"/>
</dbReference>
<dbReference type="PROSITE" id="PS50008">
    <property type="entry name" value="PIPLC_Y_DOMAIN"/>
    <property type="match status" value="1"/>
</dbReference>
<gene>
    <name evidence="16" type="primary">Plch2</name>
    <name type="synonym">Plcl4</name>
</gene>
<sequence>MGGLAWGPSRAAGSSWVNASGTWEQPLRGFSGLQGGRRRGRGEKGIPEEPLCQLTPQLGLSLRVPFGLGDYGLDMPGPQPSAASQTTGAVACLAEVLLWVGGSVVVSPRWQLSLVVERCMSAMQEGTQMVKLRGSSKGLVRFYYLDEHRSCLRWRPSRKNEKAKISIDSIQEVSEGRQSEIFQRYPDSSFDPNCCFSIYHGSHRESLDLVSPSSEEARTWVTGLRYLMAGISDEDSLARRQRTRDQWLKQTFDEADKNGDGSLSISEVLQLLHKLNVNLPRQRVKQMFREADTDDHQGTLGFEEFCAFYKMMSTRRDLYLLMLTYSNHKDHLDASDLQRFLEVEQKMNGVTLESCQNIIEQFEPCLENKSKGMLGIDGFTNYTRSPAGDIFNPEHNRVHQDMTQPLSHYFITSSHNTYLVGDQLMSQSRVDMYAWVLQAGCRCVEVDCWDGPDGEPIVHHGYTLTSKILFKDVIETINKYAFIKNEYPVILSIENHCSVVQQKKMAQYLTDILGDKLDLSSVSSEDATMLPSPQMLKGKILVKGKKLPANISEDAEEGEVSDEDSADEMEDDCKLLNGDASTNRKRVENIAKKKLDSLIKESKIRDCEDPNDFSVSTLSPSGKLGRKAEAKKGQSKVEEDVEAGEDSGVSRQNSRLFMSSFSKRKKKGSKIKKVASVEEGDETLDSPGSQSRGTARQKKTMKLSRALSDLVKYTKSVGTHDVEIEVVSSWQVSSFSETKAHQILQQKPTQYLRFNQHQLSRIYPSSYRVDSSNYNPQPFWNAGCQMVALNYQSEGRMLQLNRAKFSANGDCGYVLKPQCMCQGVFNPNSEDPLPGQLKKQLALRIISGQQLPKPRDSVLGDRGEIIDPFVEVEVIGLPVDCSKEQTRVVDDNGFNPMWEETLVFTVHMPEIALVRFLVWDHDPIGRDFIGQRTLAFSSIMPGYRHVYLEGMEEASIFVHVAVSDISGKVKQTLGLKGLFLRGTKPGSLDSHAAGQPLPRPSVSQRLLRRTASAPTKSQKPSRKGFPELALGTQDAGSEGAADDVAPSSPNPALEAPTQERSGSSSPRDTRLFPLQRPISPLCSLEPIAEEPALGPGLPLQAAAPTGPSQEGSQCPVGLGAKVTSSQQTSLGAFGTLQLRIGGGRENEEPPLRPHNGGISSGPREGTSGRQTDSKSRSRVPGHLPVVRRAKSEGQVLSELSPTPAVYSDATGTDRLWQRLEPGSHRDSVSSSSSMSSNDTVIDLSLPSLGLCRSRESIPGVSLGRLTSRPCLASAARPDLPPVTKSKSNPNLRVAGGLPTAPDELQPRPLAPRLTGHHPRPPWHHLTLVGLRDCPVSAKSKSLGDLTADDFAPSFQGSTSSLSCGLGSLGVAHQVLEPGIRRDALTEQLRWLTGFQQAGDITSPTSLGPAGDGSVGGPSFLRRSSSRSQSRVRAIASRARQAQERQQRLRGQDSRGPPEEERGTPEGACSVGHEGCVDVPMPAKGAPEQVCGAADGQLLLRL</sequence>
<name>PLCH2_MOUSE</name>
<organism>
    <name type="scientific">Mus musculus</name>
    <name type="common">Mouse</name>
    <dbReference type="NCBI Taxonomy" id="10090"/>
    <lineage>
        <taxon>Eukaryota</taxon>
        <taxon>Metazoa</taxon>
        <taxon>Chordata</taxon>
        <taxon>Craniata</taxon>
        <taxon>Vertebrata</taxon>
        <taxon>Euteleostomi</taxon>
        <taxon>Mammalia</taxon>
        <taxon>Eutheria</taxon>
        <taxon>Euarchontoglires</taxon>
        <taxon>Glires</taxon>
        <taxon>Rodentia</taxon>
        <taxon>Myomorpha</taxon>
        <taxon>Muroidea</taxon>
        <taxon>Muridae</taxon>
        <taxon>Murinae</taxon>
        <taxon>Mus</taxon>
        <taxon>Mus</taxon>
    </lineage>
</organism>
<comment type="function">
    <text evidence="9 10">The production of the second messenger molecules diacylglycerol (DAG) and inositol 1,4,5-trisphosphate (IP3) is mediated by activated phosphatidylinositol-specific phospholipase C enzymes. This phospholipase activity is very sensitive to calcium. May be important for formation and maintenance of the neuronal network in the postnatal brain.</text>
</comment>
<comment type="catalytic activity">
    <reaction evidence="9">
        <text>a 1,2-diacyl-sn-glycero-3-phospho-(1D-myo-inositol-4,5-bisphosphate) + H2O = 1D-myo-inositol 1,4,5-trisphosphate + a 1,2-diacyl-sn-glycerol + H(+)</text>
        <dbReference type="Rhea" id="RHEA:33179"/>
        <dbReference type="ChEBI" id="CHEBI:15377"/>
        <dbReference type="ChEBI" id="CHEBI:15378"/>
        <dbReference type="ChEBI" id="CHEBI:17815"/>
        <dbReference type="ChEBI" id="CHEBI:58456"/>
        <dbReference type="ChEBI" id="CHEBI:203600"/>
        <dbReference type="EC" id="3.1.4.11"/>
    </reaction>
    <physiologicalReaction direction="left-to-right" evidence="15">
        <dbReference type="Rhea" id="RHEA:33180"/>
    </physiologicalReaction>
</comment>
<comment type="cofactor">
    <cofactor evidence="3">
        <name>Ca(2+)</name>
        <dbReference type="ChEBI" id="CHEBI:29108"/>
    </cofactor>
</comment>
<comment type="activity regulation">
    <text evidence="2">Activity is stimulated by GNB1:GNG2.</text>
</comment>
<comment type="subcellular location">
    <subcellularLocation>
        <location evidence="9">Cytoplasm</location>
    </subcellularLocation>
    <subcellularLocation>
        <location evidence="9">Cell membrane</location>
    </subcellularLocation>
    <text evidence="9">Localized predominantly at the plasma membrane.</text>
</comment>
<comment type="alternative products">
    <event type="alternative splicing"/>
    <isoform>
        <id>A2AP18-1</id>
        <name>1</name>
        <sequence type="displayed"/>
    </isoform>
    <isoform>
        <id>A2AP18-2</id>
        <name>2</name>
        <sequence type="described" ref="VSP_029082 VSP_029083"/>
    </isoform>
    <isoform>
        <id>A2AP18-3</id>
        <name>3</name>
        <sequence type="described" ref="VSP_029081 VSP_029084"/>
    </isoform>
    <isoform>
        <id>A2AP18-4</id>
        <name>4</name>
        <sequence type="described" ref="VSP_029075 VSP_029077"/>
    </isoform>
    <isoform>
        <id>A2AP18-5</id>
        <name>5</name>
        <sequence type="described" ref="VSP_029076 VSP_029078 VSP_029079"/>
    </isoform>
</comment>
<comment type="tissue specificity">
    <text evidence="9 10">Specifically detected in the brain, with higher level in cerebral cortex, olfactory bulb and hippocampus (at protein level). Expressed in the pyramidal cells of the hippocampus, but also in eye and lung.</text>
</comment>
<comment type="developmental stage">
    <text evidence="9">Expressed at 2 weeks after birth but barely detected 1 week after birth. Increased expression during brain development.</text>
</comment>
<comment type="miscellaneous">
    <molecule>Isoform 3</molecule>
    <text evidence="14">May be produced at very low levels due to a premature stop codon in the mRNA, leading to nonsense-mediated mRNA decay.</text>
</comment>
<comment type="sequence caution" evidence="14">
    <conflict type="erroneous initiation">
        <sequence resource="EMBL-CDS" id="BAC32005"/>
    </conflict>
    <text>Truncated N-terminus.</text>
</comment>
<comment type="sequence caution" evidence="14">
    <conflict type="miscellaneous discrepancy">
        <sequence resource="EMBL-CDS" id="BAC32005"/>
    </conflict>
    <text>Aberrant splicing.</text>
</comment>
<comment type="sequence caution" evidence="14">
    <conflict type="erroneous termination">
        <sequence resource="EMBL-CDS" id="BAC37371"/>
    </conflict>
    <text>Truncated C-terminus.</text>
</comment>
<comment type="sequence caution" evidence="14">
    <conflict type="erroneous gene model prediction">
        <sequence resource="EMBL-CDS" id="CAO78007"/>
    </conflict>
</comment>
<comment type="sequence caution" evidence="14">
    <conflict type="erroneous gene model prediction">
        <sequence resource="EMBL-CDS" id="CAO78129"/>
    </conflict>
</comment>
<proteinExistence type="evidence at protein level"/>
<protein>
    <recommendedName>
        <fullName evidence="14">1-phosphatidylinositol 4,5-bisphosphate phosphodiesterase eta-2</fullName>
        <ecNumber evidence="9">3.1.4.11</ecNumber>
    </recommendedName>
    <alternativeName>
        <fullName>Phosphoinositide phospholipase C-eta-2</fullName>
    </alternativeName>
    <alternativeName>
        <fullName>Phosphoinositide phospholipase C-like 4</fullName>
        <shortName>PLC-L4</shortName>
        <shortName>Phospholipase C-like protein 4</shortName>
    </alternativeName>
    <alternativeName>
        <fullName>Phospholipase C-eta-2</fullName>
        <shortName>PLC-eta2</shortName>
    </alternativeName>
</protein>
<reference key="1">
    <citation type="journal article" date="2005" name="Biochem. J.">
        <title>Molecular cloning and characterization of PLC-eta2.</title>
        <authorList>
            <person name="Zhou Y."/>
            <person name="Wing M.R."/>
            <person name="Sondek J."/>
            <person name="Harden T.K."/>
        </authorList>
    </citation>
    <scope>NUCLEOTIDE SEQUENCE [MRNA] (ISOFORM 1)</scope>
    <scope>FUNCTION</scope>
    <scope>ALTERNATIVE SPLICING</scope>
    <scope>TISSUE SPECIFICITY</scope>
    <source>
        <strain>C57BL/6J</strain>
    </source>
</reference>
<reference key="2">
    <citation type="journal article" date="2009" name="PLoS Biol.">
        <title>Lineage-specific biology revealed by a finished genome assembly of the mouse.</title>
        <authorList>
            <person name="Church D.M."/>
            <person name="Goodstadt L."/>
            <person name="Hillier L.W."/>
            <person name="Zody M.C."/>
            <person name="Goldstein S."/>
            <person name="She X."/>
            <person name="Bult C.J."/>
            <person name="Agarwala R."/>
            <person name="Cherry J.L."/>
            <person name="DiCuccio M."/>
            <person name="Hlavina W."/>
            <person name="Kapustin Y."/>
            <person name="Meric P."/>
            <person name="Maglott D."/>
            <person name="Birtle Z."/>
            <person name="Marques A.C."/>
            <person name="Graves T."/>
            <person name="Zhou S."/>
            <person name="Teague B."/>
            <person name="Potamousis K."/>
            <person name="Churas C."/>
            <person name="Place M."/>
            <person name="Herschleb J."/>
            <person name="Runnheim R."/>
            <person name="Forrest D."/>
            <person name="Amos-Landgraf J."/>
            <person name="Schwartz D.C."/>
            <person name="Cheng Z."/>
            <person name="Lindblad-Toh K."/>
            <person name="Eichler E.E."/>
            <person name="Ponting C.P."/>
        </authorList>
    </citation>
    <scope>NUCLEOTIDE SEQUENCE [LARGE SCALE GENOMIC DNA]</scope>
    <source>
        <strain>C57BL/6J</strain>
    </source>
</reference>
<reference key="3">
    <citation type="journal article" date="2005" name="Science">
        <title>The transcriptional landscape of the mammalian genome.</title>
        <authorList>
            <person name="Carninci P."/>
            <person name="Kasukawa T."/>
            <person name="Katayama S."/>
            <person name="Gough J."/>
            <person name="Frith M.C."/>
            <person name="Maeda N."/>
            <person name="Oyama R."/>
            <person name="Ravasi T."/>
            <person name="Lenhard B."/>
            <person name="Wells C."/>
            <person name="Kodzius R."/>
            <person name="Shimokawa K."/>
            <person name="Bajic V.B."/>
            <person name="Brenner S.E."/>
            <person name="Batalov S."/>
            <person name="Forrest A.R."/>
            <person name="Zavolan M."/>
            <person name="Davis M.J."/>
            <person name="Wilming L.G."/>
            <person name="Aidinis V."/>
            <person name="Allen J.E."/>
            <person name="Ambesi-Impiombato A."/>
            <person name="Apweiler R."/>
            <person name="Aturaliya R.N."/>
            <person name="Bailey T.L."/>
            <person name="Bansal M."/>
            <person name="Baxter L."/>
            <person name="Beisel K.W."/>
            <person name="Bersano T."/>
            <person name="Bono H."/>
            <person name="Chalk A.M."/>
            <person name="Chiu K.P."/>
            <person name="Choudhary V."/>
            <person name="Christoffels A."/>
            <person name="Clutterbuck D.R."/>
            <person name="Crowe M.L."/>
            <person name="Dalla E."/>
            <person name="Dalrymple B.P."/>
            <person name="de Bono B."/>
            <person name="Della Gatta G."/>
            <person name="di Bernardo D."/>
            <person name="Down T."/>
            <person name="Engstrom P."/>
            <person name="Fagiolini M."/>
            <person name="Faulkner G."/>
            <person name="Fletcher C.F."/>
            <person name="Fukushima T."/>
            <person name="Furuno M."/>
            <person name="Futaki S."/>
            <person name="Gariboldi M."/>
            <person name="Georgii-Hemming P."/>
            <person name="Gingeras T.R."/>
            <person name="Gojobori T."/>
            <person name="Green R.E."/>
            <person name="Gustincich S."/>
            <person name="Harbers M."/>
            <person name="Hayashi Y."/>
            <person name="Hensch T.K."/>
            <person name="Hirokawa N."/>
            <person name="Hill D."/>
            <person name="Huminiecki L."/>
            <person name="Iacono M."/>
            <person name="Ikeo K."/>
            <person name="Iwama A."/>
            <person name="Ishikawa T."/>
            <person name="Jakt M."/>
            <person name="Kanapin A."/>
            <person name="Katoh M."/>
            <person name="Kawasawa Y."/>
            <person name="Kelso J."/>
            <person name="Kitamura H."/>
            <person name="Kitano H."/>
            <person name="Kollias G."/>
            <person name="Krishnan S.P."/>
            <person name="Kruger A."/>
            <person name="Kummerfeld S.K."/>
            <person name="Kurochkin I.V."/>
            <person name="Lareau L.F."/>
            <person name="Lazarevic D."/>
            <person name="Lipovich L."/>
            <person name="Liu J."/>
            <person name="Liuni S."/>
            <person name="McWilliam S."/>
            <person name="Madan Babu M."/>
            <person name="Madera M."/>
            <person name="Marchionni L."/>
            <person name="Matsuda H."/>
            <person name="Matsuzawa S."/>
            <person name="Miki H."/>
            <person name="Mignone F."/>
            <person name="Miyake S."/>
            <person name="Morris K."/>
            <person name="Mottagui-Tabar S."/>
            <person name="Mulder N."/>
            <person name="Nakano N."/>
            <person name="Nakauchi H."/>
            <person name="Ng P."/>
            <person name="Nilsson R."/>
            <person name="Nishiguchi S."/>
            <person name="Nishikawa S."/>
            <person name="Nori F."/>
            <person name="Ohara O."/>
            <person name="Okazaki Y."/>
            <person name="Orlando V."/>
            <person name="Pang K.C."/>
            <person name="Pavan W.J."/>
            <person name="Pavesi G."/>
            <person name="Pesole G."/>
            <person name="Petrovsky N."/>
            <person name="Piazza S."/>
            <person name="Reed J."/>
            <person name="Reid J.F."/>
            <person name="Ring B.Z."/>
            <person name="Ringwald M."/>
            <person name="Rost B."/>
            <person name="Ruan Y."/>
            <person name="Salzberg S.L."/>
            <person name="Sandelin A."/>
            <person name="Schneider C."/>
            <person name="Schoenbach C."/>
            <person name="Sekiguchi K."/>
            <person name="Semple C.A."/>
            <person name="Seno S."/>
            <person name="Sessa L."/>
            <person name="Sheng Y."/>
            <person name="Shibata Y."/>
            <person name="Shimada H."/>
            <person name="Shimada K."/>
            <person name="Silva D."/>
            <person name="Sinclair B."/>
            <person name="Sperling S."/>
            <person name="Stupka E."/>
            <person name="Sugiura K."/>
            <person name="Sultana R."/>
            <person name="Takenaka Y."/>
            <person name="Taki K."/>
            <person name="Tammoja K."/>
            <person name="Tan S.L."/>
            <person name="Tang S."/>
            <person name="Taylor M.S."/>
            <person name="Tegner J."/>
            <person name="Teichmann S.A."/>
            <person name="Ueda H.R."/>
            <person name="van Nimwegen E."/>
            <person name="Verardo R."/>
            <person name="Wei C.L."/>
            <person name="Yagi K."/>
            <person name="Yamanishi H."/>
            <person name="Zabarovsky E."/>
            <person name="Zhu S."/>
            <person name="Zimmer A."/>
            <person name="Hide W."/>
            <person name="Bult C."/>
            <person name="Grimmond S.M."/>
            <person name="Teasdale R.D."/>
            <person name="Liu E.T."/>
            <person name="Brusic V."/>
            <person name="Quackenbush J."/>
            <person name="Wahlestedt C."/>
            <person name="Mattick J.S."/>
            <person name="Hume D.A."/>
            <person name="Kai C."/>
            <person name="Sasaki D."/>
            <person name="Tomaru Y."/>
            <person name="Fukuda S."/>
            <person name="Kanamori-Katayama M."/>
            <person name="Suzuki M."/>
            <person name="Aoki J."/>
            <person name="Arakawa T."/>
            <person name="Iida J."/>
            <person name="Imamura K."/>
            <person name="Itoh M."/>
            <person name="Kato T."/>
            <person name="Kawaji H."/>
            <person name="Kawagashira N."/>
            <person name="Kawashima T."/>
            <person name="Kojima M."/>
            <person name="Kondo S."/>
            <person name="Konno H."/>
            <person name="Nakano K."/>
            <person name="Ninomiya N."/>
            <person name="Nishio T."/>
            <person name="Okada M."/>
            <person name="Plessy C."/>
            <person name="Shibata K."/>
            <person name="Shiraki T."/>
            <person name="Suzuki S."/>
            <person name="Tagami M."/>
            <person name="Waki K."/>
            <person name="Watahiki A."/>
            <person name="Okamura-Oho Y."/>
            <person name="Suzuki H."/>
            <person name="Kawai J."/>
            <person name="Hayashizaki Y."/>
        </authorList>
    </citation>
    <scope>NUCLEOTIDE SEQUENCE [LARGE SCALE MRNA] OF 1-664 (ISOFORM 4)</scope>
    <scope>NUCLEOTIDE SEQUENCE [LARGE SCALE MRNA] OF 2-1501 (ISOFORM 5)</scope>
    <scope>NUCLEOTIDE SEQUENCE [LARGE SCALE MRNA] OF 2-246 (ISOFORM 1)</scope>
    <source>
        <strain>C57BL/6J</strain>
        <tissue>Eye</tissue>
        <tissue>Hippocampus</tissue>
        <tissue>Retina</tissue>
    </source>
</reference>
<reference key="4">
    <citation type="journal article" date="2005" name="J. Biol. Chem.">
        <title>A novel phospholipase C, PLC(eta)2, is a neuron-specific isozyme.</title>
        <authorList>
            <person name="Nakahara M."/>
            <person name="Shimozawa M."/>
            <person name="Nakamura Y."/>
            <person name="Irino Y."/>
            <person name="Morita M."/>
            <person name="Kudo Y."/>
            <person name="Fukami K."/>
        </authorList>
    </citation>
    <scope>NUCLEOTIDE SEQUENCE [MRNA] OF 75-1501 (ISOFORM 2)</scope>
    <scope>TISSUE SPECIFICITY</scope>
    <scope>SUBCELLULAR LOCATION</scope>
    <scope>REGION</scope>
    <scope>FUNCTION</scope>
    <scope>DEVELOPMENTAL STAGE</scope>
    <scope>MUTAGENESIS OF HIS-415</scope>
    <scope>CATALYTIC ACTIVITY</scope>
    <source>
        <strain>C57BL/6J x 129</strain>
        <tissue>Brain</tissue>
    </source>
</reference>
<reference key="5">
    <citation type="journal article" date="2004" name="Genome Res.">
        <title>The status, quality, and expansion of the NIH full-length cDNA project: the Mammalian Gene Collection (MGC).</title>
        <authorList>
            <consortium name="The MGC Project Team"/>
        </authorList>
    </citation>
    <scope>NUCLEOTIDE SEQUENCE [LARGE SCALE MRNA] OF 624-1501 (ISOFORM 3)</scope>
    <source>
        <tissue>Eye</tissue>
    </source>
</reference>
<reference key="6">
    <citation type="journal article" date="2004" name="Mol. Cell. Proteomics">
        <title>Phosphoproteomic analysis of the developing mouse brain.</title>
        <authorList>
            <person name="Ballif B.A."/>
            <person name="Villen J."/>
            <person name="Beausoleil S.A."/>
            <person name="Schwartz D."/>
            <person name="Gygi S.P."/>
        </authorList>
    </citation>
    <scope>PHOSPHORYLATION [LARGE SCALE ANALYSIS] AT SER-676 AND SER-686</scope>
    <scope>IDENTIFICATION BY MASS SPECTROMETRY [LARGE SCALE ANALYSIS]</scope>
    <source>
        <tissue>Embryonic brain</tissue>
    </source>
</reference>
<reference key="7">
    <citation type="journal article" date="2007" name="Mol. Cell. Proteomics">
        <title>Qualitative and quantitative analyses of protein phosphorylation in naive and stimulated mouse synaptosomal preparations.</title>
        <authorList>
            <person name="Munton R.P."/>
            <person name="Tweedie-Cullen R."/>
            <person name="Livingstone-Zatchej M."/>
            <person name="Weinandy F."/>
            <person name="Waidelich M."/>
            <person name="Longo D."/>
            <person name="Gehrig P."/>
            <person name="Potthast F."/>
            <person name="Rutishauser D."/>
            <person name="Gerrits B."/>
            <person name="Panse C."/>
            <person name="Schlapbach R."/>
            <person name="Mansuy I.M."/>
        </authorList>
    </citation>
    <scope>IDENTIFICATION BY MASS SPECTROMETRY [LARGE SCALE ANALYSIS]</scope>
    <source>
        <tissue>Brain cortex</tissue>
    </source>
</reference>
<reference key="8">
    <citation type="journal article" date="2010" name="Cell">
        <title>A tissue-specific atlas of mouse protein phosphorylation and expression.</title>
        <authorList>
            <person name="Huttlin E.L."/>
            <person name="Jedrychowski M.P."/>
            <person name="Elias J.E."/>
            <person name="Goswami T."/>
            <person name="Rad R."/>
            <person name="Beausoleil S.A."/>
            <person name="Villen J."/>
            <person name="Haas W."/>
            <person name="Sowa M.E."/>
            <person name="Gygi S.P."/>
        </authorList>
    </citation>
    <scope>PHOSPHORYLATION [LARGE SCALE ANALYSIS] AT SER-561; SER-565; SER-676 AND SER-686</scope>
    <scope>IDENTIFICATION BY MASS SPECTROMETRY [LARGE SCALE ANALYSIS]</scope>
    <source>
        <tissue>Brain</tissue>
    </source>
</reference>
<keyword id="KW-0025">Alternative splicing</keyword>
<keyword id="KW-0106">Calcium</keyword>
<keyword id="KW-1003">Cell membrane</keyword>
<keyword id="KW-0963">Cytoplasm</keyword>
<keyword id="KW-0378">Hydrolase</keyword>
<keyword id="KW-0442">Lipid degradation</keyword>
<keyword id="KW-0443">Lipid metabolism</keyword>
<keyword id="KW-0472">Membrane</keyword>
<keyword id="KW-0479">Metal-binding</keyword>
<keyword id="KW-0597">Phosphoprotein</keyword>
<keyword id="KW-1185">Reference proteome</keyword>
<keyword id="KW-0677">Repeat</keyword>
<keyword id="KW-0807">Transducer</keyword>
<accession>A2AP18</accession>
<accession>A6PWW5</accession>
<accession>Q3LUA7</accession>
<accession>Q4QSC7</accession>
<accession>Q80WP6</accession>
<accession>Q8BJV1</accession>
<accession>Q8BWU4</accession>
<accession>Q8BXN5</accession>
<accession>Q8CFR1</accession>
<evidence type="ECO:0000250" key="1"/>
<evidence type="ECO:0000250" key="2">
    <source>
        <dbReference type="UniProtKB" id="O75038"/>
    </source>
</evidence>
<evidence type="ECO:0000255" key="3">
    <source>
        <dbReference type="PROSITE-ProRule" id="PRU00041"/>
    </source>
</evidence>
<evidence type="ECO:0000255" key="4">
    <source>
        <dbReference type="PROSITE-ProRule" id="PRU00145"/>
    </source>
</evidence>
<evidence type="ECO:0000255" key="5">
    <source>
        <dbReference type="PROSITE-ProRule" id="PRU00270"/>
    </source>
</evidence>
<evidence type="ECO:0000255" key="6">
    <source>
        <dbReference type="PROSITE-ProRule" id="PRU00271"/>
    </source>
</evidence>
<evidence type="ECO:0000255" key="7">
    <source>
        <dbReference type="PROSITE-ProRule" id="PRU00448"/>
    </source>
</evidence>
<evidence type="ECO:0000256" key="8">
    <source>
        <dbReference type="SAM" id="MobiDB-lite"/>
    </source>
</evidence>
<evidence type="ECO:0000269" key="9">
    <source>
    </source>
</evidence>
<evidence type="ECO:0000269" key="10">
    <source>
    </source>
</evidence>
<evidence type="ECO:0000303" key="11">
    <source>
    </source>
</evidence>
<evidence type="ECO:0000303" key="12">
    <source>
    </source>
</evidence>
<evidence type="ECO:0000303" key="13">
    <source>
    </source>
</evidence>
<evidence type="ECO:0000305" key="14"/>
<evidence type="ECO:0000305" key="15">
    <source>
    </source>
</evidence>
<evidence type="ECO:0000312" key="16">
    <source>
        <dbReference type="MGI" id="MGI:2443078"/>
    </source>
</evidence>
<evidence type="ECO:0007744" key="17">
    <source>
    </source>
</evidence>
<evidence type="ECO:0007744" key="18">
    <source>
    </source>
</evidence>
<feature type="chain" id="PRO_0000308959" description="1-phosphatidylinositol 4,5-bisphosphate phosphodiesterase eta-2">
    <location>
        <begin position="1"/>
        <end position="1501"/>
    </location>
</feature>
<feature type="domain" description="PH" evidence="4">
    <location>
        <begin position="121"/>
        <end position="229"/>
    </location>
</feature>
<feature type="domain" description="EF-hand 1" evidence="7">
    <location>
        <begin position="243"/>
        <end position="278"/>
    </location>
</feature>
<feature type="domain" description="EF-hand 2" evidence="7">
    <location>
        <begin position="279"/>
        <end position="315"/>
    </location>
</feature>
<feature type="domain" description="PI-PLC X-box" evidence="5">
    <location>
        <begin position="400"/>
        <end position="545"/>
    </location>
</feature>
<feature type="domain" description="PI-PLC Y-box" evidence="6">
    <location>
        <begin position="707"/>
        <end position="821"/>
    </location>
</feature>
<feature type="domain" description="C2" evidence="3">
    <location>
        <begin position="821"/>
        <end position="950"/>
    </location>
</feature>
<feature type="region of interest" description="Disordered" evidence="8">
    <location>
        <begin position="28"/>
        <end position="47"/>
    </location>
</feature>
<feature type="region of interest" description="Necessary for plasma membrane localization">
    <location>
        <begin position="75"/>
        <end position="229"/>
    </location>
</feature>
<feature type="region of interest" description="Disordered" evidence="8">
    <location>
        <begin position="551"/>
        <end position="570"/>
    </location>
</feature>
<feature type="region of interest" description="Disordered" evidence="8">
    <location>
        <begin position="609"/>
        <end position="700"/>
    </location>
</feature>
<feature type="region of interest" description="Disordered" evidence="8">
    <location>
        <begin position="986"/>
        <end position="1073"/>
    </location>
</feature>
<feature type="region of interest" description="Disordered" evidence="8">
    <location>
        <begin position="1089"/>
        <end position="1238"/>
    </location>
</feature>
<feature type="region of interest" description="Disordered" evidence="8">
    <location>
        <begin position="1273"/>
        <end position="1305"/>
    </location>
</feature>
<feature type="region of interest" description="Disordered" evidence="8">
    <location>
        <begin position="1398"/>
        <end position="1469"/>
    </location>
</feature>
<feature type="compositionally biased region" description="Acidic residues" evidence="8">
    <location>
        <begin position="553"/>
        <end position="570"/>
    </location>
</feature>
<feature type="compositionally biased region" description="Basic and acidic residues" evidence="8">
    <location>
        <begin position="626"/>
        <end position="638"/>
    </location>
</feature>
<feature type="compositionally biased region" description="Basic residues" evidence="8">
    <location>
        <begin position="662"/>
        <end position="673"/>
    </location>
</feature>
<feature type="compositionally biased region" description="Low complexity" evidence="8">
    <location>
        <begin position="1089"/>
        <end position="1107"/>
    </location>
</feature>
<feature type="compositionally biased region" description="Basic and acidic residues" evidence="8">
    <location>
        <begin position="1142"/>
        <end position="1151"/>
    </location>
</feature>
<feature type="compositionally biased region" description="Basic and acidic residues" evidence="8">
    <location>
        <begin position="1215"/>
        <end position="1227"/>
    </location>
</feature>
<feature type="compositionally biased region" description="Low complexity" evidence="8">
    <location>
        <begin position="1421"/>
        <end position="1439"/>
    </location>
</feature>
<feature type="compositionally biased region" description="Basic and acidic residues" evidence="8">
    <location>
        <begin position="1440"/>
        <end position="1463"/>
    </location>
</feature>
<feature type="active site" evidence="5">
    <location>
        <position position="415"/>
    </location>
</feature>
<feature type="active site" evidence="5">
    <location>
        <position position="459"/>
    </location>
</feature>
<feature type="binding site" evidence="7">
    <location>
        <position position="256"/>
    </location>
    <ligand>
        <name>Ca(2+)</name>
        <dbReference type="ChEBI" id="CHEBI:29108"/>
        <label>1</label>
    </ligand>
</feature>
<feature type="binding site" evidence="7">
    <location>
        <position position="258"/>
    </location>
    <ligand>
        <name>Ca(2+)</name>
        <dbReference type="ChEBI" id="CHEBI:29108"/>
        <label>1</label>
    </ligand>
</feature>
<feature type="binding site" evidence="7">
    <location>
        <position position="260"/>
    </location>
    <ligand>
        <name>Ca(2+)</name>
        <dbReference type="ChEBI" id="CHEBI:29108"/>
        <label>1</label>
    </ligand>
</feature>
<feature type="binding site" evidence="7">
    <location>
        <position position="262"/>
    </location>
    <ligand>
        <name>Ca(2+)</name>
        <dbReference type="ChEBI" id="CHEBI:29108"/>
        <label>1</label>
    </ligand>
</feature>
<feature type="binding site" evidence="7">
    <location>
        <position position="267"/>
    </location>
    <ligand>
        <name>Ca(2+)</name>
        <dbReference type="ChEBI" id="CHEBI:29108"/>
        <label>1</label>
    </ligand>
</feature>
<feature type="binding site" evidence="1">
    <location>
        <position position="416"/>
    </location>
    <ligand>
        <name>Ca(2+)</name>
        <dbReference type="ChEBI" id="CHEBI:29108"/>
        <label>2</label>
        <note>catalytic</note>
    </ligand>
</feature>
<feature type="binding site" evidence="1">
    <location>
        <position position="445"/>
    </location>
    <ligand>
        <name>Ca(2+)</name>
        <dbReference type="ChEBI" id="CHEBI:29108"/>
        <label>2</label>
        <note>catalytic</note>
    </ligand>
</feature>
<feature type="binding site" evidence="1">
    <location>
        <position position="447"/>
    </location>
    <ligand>
        <name>Ca(2+)</name>
        <dbReference type="ChEBI" id="CHEBI:29108"/>
        <label>2</label>
        <note>catalytic</note>
    </ligand>
</feature>
<feature type="binding site" evidence="1">
    <location>
        <position position="494"/>
    </location>
    <ligand>
        <name>Ca(2+)</name>
        <dbReference type="ChEBI" id="CHEBI:29108"/>
        <label>2</label>
        <note>catalytic</note>
    </ligand>
</feature>
<feature type="binding site" evidence="1">
    <location>
        <position position="543"/>
    </location>
    <ligand>
        <name>substrate</name>
    </ligand>
</feature>
<feature type="binding site" evidence="1">
    <location>
        <position position="545"/>
    </location>
    <ligand>
        <name>substrate</name>
    </ligand>
</feature>
<feature type="binding site" evidence="1">
    <location>
        <position position="734"/>
    </location>
    <ligand>
        <name>substrate</name>
    </ligand>
</feature>
<feature type="binding site" evidence="1">
    <location>
        <position position="761"/>
    </location>
    <ligand>
        <name>substrate</name>
    </ligand>
</feature>
<feature type="binding site" evidence="1">
    <location>
        <position position="865"/>
    </location>
    <ligand>
        <name>Ca(2+)</name>
        <dbReference type="ChEBI" id="CHEBI:29108"/>
        <label>3</label>
    </ligand>
</feature>
<feature type="binding site" evidence="1">
    <location>
        <position position="867"/>
    </location>
    <ligand>
        <name>Ca(2+)</name>
        <dbReference type="ChEBI" id="CHEBI:29108"/>
        <label>3</label>
    </ligand>
</feature>
<feature type="binding site" evidence="1">
    <location>
        <position position="891"/>
    </location>
    <ligand>
        <name>Ca(2+)</name>
        <dbReference type="ChEBI" id="CHEBI:29108"/>
        <label>3</label>
    </ligand>
</feature>
<feature type="binding site" evidence="1">
    <location>
        <position position="920"/>
    </location>
    <ligand>
        <name>Ca(2+)</name>
        <dbReference type="ChEBI" id="CHEBI:29108"/>
        <label>4</label>
    </ligand>
</feature>
<feature type="binding site" evidence="1">
    <location>
        <position position="921"/>
    </location>
    <ligand>
        <name>Ca(2+)</name>
        <dbReference type="ChEBI" id="CHEBI:29108"/>
        <label>4</label>
    </ligand>
</feature>
<feature type="binding site" evidence="1">
    <location>
        <position position="922"/>
    </location>
    <ligand>
        <name>Ca(2+)</name>
        <dbReference type="ChEBI" id="CHEBI:29108"/>
        <label>4</label>
    </ligand>
</feature>
<feature type="modified residue" description="Phosphoserine" evidence="18">
    <location>
        <position position="561"/>
    </location>
</feature>
<feature type="modified residue" description="Phosphoserine" evidence="18">
    <location>
        <position position="565"/>
    </location>
</feature>
<feature type="modified residue" description="Phosphoserine" evidence="17 18">
    <location>
        <position position="676"/>
    </location>
</feature>
<feature type="modified residue" description="Phosphoserine" evidence="17 18">
    <location>
        <position position="686"/>
    </location>
</feature>
<feature type="splice variant" id="VSP_029075" description="In isoform 4." evidence="13">
    <location>
        <begin position="1"/>
        <end position="105"/>
    </location>
</feature>
<feature type="splice variant" id="VSP_029076" description="In isoform 5." evidence="13">
    <location>
        <begin position="40"/>
        <end position="115"/>
    </location>
</feature>
<feature type="splice variant" id="VSP_029077" description="In isoform 4." evidence="13">
    <original>VSPRWQLSLVV</original>
    <variation>MDAGAAPQKHM</variation>
    <location>
        <begin position="106"/>
        <end position="116"/>
    </location>
</feature>
<feature type="splice variant" id="VSP_029078" description="In isoform 5." evidence="13">
    <original>ASTNRKRVENIAKKKLDSLIKESKIRDCEDPNDFSVSTLSPSGKLGRKAEAKKGQSKVEEDVEAGEDSGVSRQNSRLFMSSFSKRKKKGSKIKKVA</original>
    <variation>VSGSPGSACREPGVGPQHPRPILSTKGIYLPQRERGQGVRDKDRRWRVREKGKGTREGARGICPGGRGDKGLPLDREETDRQTWPIGKWWFTNVKK</variation>
    <location>
        <begin position="580"/>
        <end position="675"/>
    </location>
</feature>
<feature type="splice variant" id="VSP_029079" description="In isoform 5." evidence="13">
    <location>
        <begin position="676"/>
        <end position="1501"/>
    </location>
</feature>
<feature type="splice variant" id="VSP_029081" description="In isoform 3." evidence="11">
    <original>DTRLFPLQRPISPLCSLEPIAEEPALGPGLPLQAAAPTGPSQEGSQCPVGLGAKVTSSQQTSLGAFGTLQLRIGGGRENEEPPLRPHNGGISSGPREGTSGRQTDSKSRSRVPGHLPVVRRAKSEGQVLSELSPTPAVYSDATGTDRLWQRLEPGSHRDSVSSSSSMSSNDTVIDLSLPSLGLCR</original>
    <variation>GKAPGGEATEERTLAQVRSPNAPEGPGPAGMAATCMKCVVGSCAGMDVEGLQREQQPSPGPAGSHMAISHQPRARVDSLGGPCCSPSPRATPGRSKEAPKGPRARRQGPGGGSVSSDSSSPDSPGSPKVAPCQPEGAHRQQGALQGEMNALFVQKLEEIRSHSPMFSTGKACRSAASHALYTWHA</variation>
    <location>
        <begin position="1068"/>
        <end position="1252"/>
    </location>
</feature>
<feature type="splice variant" id="VSP_029082" description="In isoform 2." evidence="12">
    <original>DTRLFPLQRPISPLCSLEPIAEEPALGPGLPLQAAAPTGPSQEGSQCPVGLGAKVTSSQQTSLGAFGTLQLRIGGGRENEEPPLRPHNGGISSGPREGTSGRQTDSKSRSRVPGHLPVVRRAKSEGQVLSELSPTPAVYSDATGTDRLWQRLEPGSHRDSVSSSSSMSSND</original>
    <variation>GKAPGGEATEERTLAQVRSPNAPEGPGPAGMAATCMKCVVGSCAGMDVEGLRREQQPSPGPAGSHMAISHQPRARVDSLGGPCCSPSPRATPGRSKEAPKGPRARRQGPGGGSVSSDSSSPDSPGSPKVAPCQPEGAHRQQGALQGEMNALFVQKLEEIRSHSPMFSTVRD</variation>
    <location>
        <begin position="1068"/>
        <end position="1238"/>
    </location>
</feature>
<feature type="splice variant" id="VSP_029083" description="In isoform 2." evidence="12">
    <location>
        <begin position="1239"/>
        <end position="1501"/>
    </location>
</feature>
<feature type="splice variant" id="VSP_029084" description="In isoform 3." evidence="11">
    <location>
        <begin position="1253"/>
        <end position="1501"/>
    </location>
</feature>
<feature type="mutagenesis site" description="Inhibition of activity." evidence="9">
    <original>H</original>
    <variation>A</variation>
    <location>
        <position position="415"/>
    </location>
</feature>
<feature type="sequence conflict" description="In Ref. 3; BAC34011." evidence="14" ref="3">
    <original>F</original>
    <variation>L</variation>
    <location>
        <position position="340"/>
    </location>
</feature>
<feature type="sequence conflict" description="In Ref. 5; AAH40465." evidence="14" ref="5">
    <original>RK</original>
    <variation>HR</variation>
    <location>
        <begin position="664"/>
        <end position="665"/>
    </location>
</feature>
<feature type="sequence conflict" description="In Ref. 3; BAC32005." evidence="14" ref="3">
    <original>N</original>
    <variation>D</variation>
    <location>
        <position position="781"/>
    </location>
</feature>
<feature type="sequence conflict" description="In Ref. 3; BAC32005." evidence="14" ref="3">
    <original>P</original>
    <variation>A</variation>
    <location>
        <position position="1258"/>
    </location>
</feature>
<feature type="sequence conflict" description="In Ref. 3; BAC32005." evidence="14" ref="3">
    <original>G</original>
    <variation>S</variation>
    <location>
        <position position="1495"/>
    </location>
</feature>